<organism>
    <name type="scientific">Staphylococcus epidermidis (strain ATCC 35984 / DSM 28319 / BCRC 17069 / CCUG 31568 / BM 3577 / RP62A)</name>
    <dbReference type="NCBI Taxonomy" id="176279"/>
    <lineage>
        <taxon>Bacteria</taxon>
        <taxon>Bacillati</taxon>
        <taxon>Bacillota</taxon>
        <taxon>Bacilli</taxon>
        <taxon>Bacillales</taxon>
        <taxon>Staphylococcaceae</taxon>
        <taxon>Staphylococcus</taxon>
    </lineage>
</organism>
<accession>Q5HNM5</accession>
<reference key="1">
    <citation type="journal article" date="2005" name="J. Bacteriol.">
        <title>Insights on evolution of virulence and resistance from the complete genome analysis of an early methicillin-resistant Staphylococcus aureus strain and a biofilm-producing methicillin-resistant Staphylococcus epidermidis strain.</title>
        <authorList>
            <person name="Gill S.R."/>
            <person name="Fouts D.E."/>
            <person name="Archer G.L."/>
            <person name="Mongodin E.F."/>
            <person name="DeBoy R.T."/>
            <person name="Ravel J."/>
            <person name="Paulsen I.T."/>
            <person name="Kolonay J.F."/>
            <person name="Brinkac L.M."/>
            <person name="Beanan M.J."/>
            <person name="Dodson R.J."/>
            <person name="Daugherty S.C."/>
            <person name="Madupu R."/>
            <person name="Angiuoli S.V."/>
            <person name="Durkin A.S."/>
            <person name="Haft D.H."/>
            <person name="Vamathevan J.J."/>
            <person name="Khouri H."/>
            <person name="Utterback T.R."/>
            <person name="Lee C."/>
            <person name="Dimitrov G."/>
            <person name="Jiang L."/>
            <person name="Qin H."/>
            <person name="Weidman J."/>
            <person name="Tran K."/>
            <person name="Kang K.H."/>
            <person name="Hance I.R."/>
            <person name="Nelson K.E."/>
            <person name="Fraser C.M."/>
        </authorList>
    </citation>
    <scope>NUCLEOTIDE SEQUENCE [LARGE SCALE GENOMIC DNA]</scope>
    <source>
        <strain>ATCC 35984 / DSM 28319 / BCRC 17069 / CCUG 31568 / BM 3577 / RP62A</strain>
    </source>
</reference>
<name>RL20_STAEQ</name>
<feature type="chain" id="PRO_0000177230" description="Large ribosomal subunit protein bL20">
    <location>
        <begin position="1"/>
        <end position="118"/>
    </location>
</feature>
<proteinExistence type="inferred from homology"/>
<protein>
    <recommendedName>
        <fullName evidence="1">Large ribosomal subunit protein bL20</fullName>
    </recommendedName>
    <alternativeName>
        <fullName evidence="2">50S ribosomal protein L20</fullName>
    </alternativeName>
</protein>
<sequence length="118" mass="13713">MPRVKGGTVTRARRKKTIKLAKGYFGSKHTLYKVAKQQVMKSGQYAFRDRRQRKRDFRKLWITRINAAARQHDISYSRLMNGLKKAEIDINRKMLSEIAISDDKAFAELVSKAKEALK</sequence>
<evidence type="ECO:0000255" key="1">
    <source>
        <dbReference type="HAMAP-Rule" id="MF_00382"/>
    </source>
</evidence>
<evidence type="ECO:0000305" key="2"/>
<keyword id="KW-1185">Reference proteome</keyword>
<keyword id="KW-0687">Ribonucleoprotein</keyword>
<keyword id="KW-0689">Ribosomal protein</keyword>
<keyword id="KW-0694">RNA-binding</keyword>
<keyword id="KW-0699">rRNA-binding</keyword>
<comment type="function">
    <text evidence="1">Binds directly to 23S ribosomal RNA and is necessary for the in vitro assembly process of the 50S ribosomal subunit. It is not involved in the protein synthesizing functions of that subunit.</text>
</comment>
<comment type="similarity">
    <text evidence="1">Belongs to the bacterial ribosomal protein bL20 family.</text>
</comment>
<dbReference type="EMBL" id="CP000029">
    <property type="protein sequence ID" value="AAW54607.1"/>
    <property type="molecule type" value="Genomic_DNA"/>
</dbReference>
<dbReference type="RefSeq" id="WP_001830839.1">
    <property type="nucleotide sequence ID" value="NC_002976.3"/>
</dbReference>
<dbReference type="SMR" id="Q5HNM5"/>
<dbReference type="STRING" id="176279.SERP1242"/>
<dbReference type="GeneID" id="50018532"/>
<dbReference type="KEGG" id="ser:SERP1242"/>
<dbReference type="eggNOG" id="COG0292">
    <property type="taxonomic scope" value="Bacteria"/>
</dbReference>
<dbReference type="HOGENOM" id="CLU_123265_0_1_9"/>
<dbReference type="Proteomes" id="UP000000531">
    <property type="component" value="Chromosome"/>
</dbReference>
<dbReference type="GO" id="GO:1990904">
    <property type="term" value="C:ribonucleoprotein complex"/>
    <property type="evidence" value="ECO:0007669"/>
    <property type="project" value="UniProtKB-KW"/>
</dbReference>
<dbReference type="GO" id="GO:0005840">
    <property type="term" value="C:ribosome"/>
    <property type="evidence" value="ECO:0007669"/>
    <property type="project" value="UniProtKB-KW"/>
</dbReference>
<dbReference type="GO" id="GO:0019843">
    <property type="term" value="F:rRNA binding"/>
    <property type="evidence" value="ECO:0007669"/>
    <property type="project" value="UniProtKB-UniRule"/>
</dbReference>
<dbReference type="GO" id="GO:0003735">
    <property type="term" value="F:structural constituent of ribosome"/>
    <property type="evidence" value="ECO:0007669"/>
    <property type="project" value="InterPro"/>
</dbReference>
<dbReference type="GO" id="GO:0000027">
    <property type="term" value="P:ribosomal large subunit assembly"/>
    <property type="evidence" value="ECO:0007669"/>
    <property type="project" value="UniProtKB-UniRule"/>
</dbReference>
<dbReference type="GO" id="GO:0006412">
    <property type="term" value="P:translation"/>
    <property type="evidence" value="ECO:0007669"/>
    <property type="project" value="InterPro"/>
</dbReference>
<dbReference type="CDD" id="cd07026">
    <property type="entry name" value="Ribosomal_L20"/>
    <property type="match status" value="1"/>
</dbReference>
<dbReference type="FunFam" id="1.10.1900.20:FF:000001">
    <property type="entry name" value="50S ribosomal protein L20"/>
    <property type="match status" value="1"/>
</dbReference>
<dbReference type="Gene3D" id="6.10.160.10">
    <property type="match status" value="1"/>
</dbReference>
<dbReference type="Gene3D" id="1.10.1900.20">
    <property type="entry name" value="Ribosomal protein L20"/>
    <property type="match status" value="1"/>
</dbReference>
<dbReference type="HAMAP" id="MF_00382">
    <property type="entry name" value="Ribosomal_bL20"/>
    <property type="match status" value="1"/>
</dbReference>
<dbReference type="InterPro" id="IPR005813">
    <property type="entry name" value="Ribosomal_bL20"/>
</dbReference>
<dbReference type="InterPro" id="IPR049946">
    <property type="entry name" value="RIBOSOMAL_L20_CS"/>
</dbReference>
<dbReference type="InterPro" id="IPR035566">
    <property type="entry name" value="Ribosomal_protein_bL20_C"/>
</dbReference>
<dbReference type="NCBIfam" id="TIGR01032">
    <property type="entry name" value="rplT_bact"/>
    <property type="match status" value="1"/>
</dbReference>
<dbReference type="PANTHER" id="PTHR10986">
    <property type="entry name" value="39S RIBOSOMAL PROTEIN L20"/>
    <property type="match status" value="1"/>
</dbReference>
<dbReference type="Pfam" id="PF00453">
    <property type="entry name" value="Ribosomal_L20"/>
    <property type="match status" value="1"/>
</dbReference>
<dbReference type="PRINTS" id="PR00062">
    <property type="entry name" value="RIBOSOMALL20"/>
</dbReference>
<dbReference type="SUPFAM" id="SSF74731">
    <property type="entry name" value="Ribosomal protein L20"/>
    <property type="match status" value="1"/>
</dbReference>
<dbReference type="PROSITE" id="PS00937">
    <property type="entry name" value="RIBOSOMAL_L20"/>
    <property type="match status" value="1"/>
</dbReference>
<gene>
    <name evidence="1" type="primary">rplT</name>
    <name type="ordered locus">SERP1242</name>
</gene>